<evidence type="ECO:0000255" key="1">
    <source>
        <dbReference type="HAMAP-Rule" id="MF_00657"/>
    </source>
</evidence>
<dbReference type="EC" id="1.14.11.-" evidence="1"/>
<dbReference type="EMBL" id="AE009442">
    <property type="protein sequence ID" value="AAO29395.1"/>
    <property type="molecule type" value="Genomic_DNA"/>
</dbReference>
<dbReference type="RefSeq" id="WP_004088698.1">
    <property type="nucleotide sequence ID" value="NC_004556.1"/>
</dbReference>
<dbReference type="SMR" id="Q87BA5"/>
<dbReference type="KEGG" id="xft:PD_1553"/>
<dbReference type="HOGENOM" id="CLU_106663_0_0_6"/>
<dbReference type="Proteomes" id="UP000002516">
    <property type="component" value="Chromosome"/>
</dbReference>
<dbReference type="GO" id="GO:0016706">
    <property type="term" value="F:2-oxoglutarate-dependent dioxygenase activity"/>
    <property type="evidence" value="ECO:0007669"/>
    <property type="project" value="UniProtKB-UniRule"/>
</dbReference>
<dbReference type="GO" id="GO:0005506">
    <property type="term" value="F:iron ion binding"/>
    <property type="evidence" value="ECO:0007669"/>
    <property type="project" value="UniProtKB-UniRule"/>
</dbReference>
<dbReference type="GO" id="GO:0031418">
    <property type="term" value="F:L-ascorbic acid binding"/>
    <property type="evidence" value="ECO:0007669"/>
    <property type="project" value="UniProtKB-KW"/>
</dbReference>
<dbReference type="GO" id="GO:0006974">
    <property type="term" value="P:DNA damage response"/>
    <property type="evidence" value="ECO:0007669"/>
    <property type="project" value="TreeGrafter"/>
</dbReference>
<dbReference type="GO" id="GO:0006879">
    <property type="term" value="P:intracellular iron ion homeostasis"/>
    <property type="evidence" value="ECO:0007669"/>
    <property type="project" value="TreeGrafter"/>
</dbReference>
<dbReference type="Gene3D" id="2.60.120.620">
    <property type="entry name" value="q2cbj1_9rhob like domain"/>
    <property type="match status" value="1"/>
</dbReference>
<dbReference type="Gene3D" id="4.10.860.20">
    <property type="entry name" value="Rabenosyn, Rab binding domain"/>
    <property type="match status" value="1"/>
</dbReference>
<dbReference type="HAMAP" id="MF_00657">
    <property type="entry name" value="Hydroxyl_YbiX"/>
    <property type="match status" value="1"/>
</dbReference>
<dbReference type="InterPro" id="IPR005123">
    <property type="entry name" value="Oxoglu/Fe-dep_dioxygenase_dom"/>
</dbReference>
<dbReference type="InterPro" id="IPR041097">
    <property type="entry name" value="PKHD_C"/>
</dbReference>
<dbReference type="InterPro" id="IPR023550">
    <property type="entry name" value="PKHD_hydroxylase"/>
</dbReference>
<dbReference type="InterPro" id="IPR006620">
    <property type="entry name" value="Pro_4_hyd_alph"/>
</dbReference>
<dbReference type="InterPro" id="IPR044862">
    <property type="entry name" value="Pro_4_hyd_alph_FE2OG_OXY"/>
</dbReference>
<dbReference type="NCBIfam" id="NF003974">
    <property type="entry name" value="PRK05467.1-3"/>
    <property type="match status" value="1"/>
</dbReference>
<dbReference type="NCBIfam" id="NF003975">
    <property type="entry name" value="PRK05467.1-4"/>
    <property type="match status" value="1"/>
</dbReference>
<dbReference type="PANTHER" id="PTHR41536">
    <property type="entry name" value="PKHD-TYPE HYDROXYLASE YBIX"/>
    <property type="match status" value="1"/>
</dbReference>
<dbReference type="PANTHER" id="PTHR41536:SF1">
    <property type="entry name" value="PKHD-TYPE HYDROXYLASE YBIX"/>
    <property type="match status" value="1"/>
</dbReference>
<dbReference type="Pfam" id="PF13640">
    <property type="entry name" value="2OG-FeII_Oxy_3"/>
    <property type="match status" value="1"/>
</dbReference>
<dbReference type="Pfam" id="PF18331">
    <property type="entry name" value="PKHD_C"/>
    <property type="match status" value="1"/>
</dbReference>
<dbReference type="SMART" id="SM00702">
    <property type="entry name" value="P4Hc"/>
    <property type="match status" value="1"/>
</dbReference>
<dbReference type="SUPFAM" id="SSF51197">
    <property type="entry name" value="Clavaminate synthase-like"/>
    <property type="match status" value="1"/>
</dbReference>
<dbReference type="PROSITE" id="PS51471">
    <property type="entry name" value="FE2OG_OXY"/>
    <property type="match status" value="1"/>
</dbReference>
<accession>Q87BA5</accession>
<keyword id="KW-0223">Dioxygenase</keyword>
<keyword id="KW-0408">Iron</keyword>
<keyword id="KW-0479">Metal-binding</keyword>
<keyword id="KW-0560">Oxidoreductase</keyword>
<keyword id="KW-1185">Reference proteome</keyword>
<keyword id="KW-0847">Vitamin C</keyword>
<gene>
    <name type="ordered locus">PD_1553</name>
</gene>
<comment type="cofactor">
    <cofactor evidence="1">
        <name>Fe(2+)</name>
        <dbReference type="ChEBI" id="CHEBI:29033"/>
    </cofactor>
    <text evidence="1">Binds 1 Fe(2+) ion per subunit.</text>
</comment>
<comment type="cofactor">
    <cofactor evidence="1">
        <name>L-ascorbate</name>
        <dbReference type="ChEBI" id="CHEBI:38290"/>
    </cofactor>
</comment>
<protein>
    <recommendedName>
        <fullName evidence="1">PKHD-type hydroxylase PD_1553</fullName>
        <ecNumber evidence="1">1.14.11.-</ecNumber>
    </recommendedName>
</protein>
<organism>
    <name type="scientific">Xylella fastidiosa (strain Temecula1 / ATCC 700964)</name>
    <dbReference type="NCBI Taxonomy" id="183190"/>
    <lineage>
        <taxon>Bacteria</taxon>
        <taxon>Pseudomonadati</taxon>
        <taxon>Pseudomonadota</taxon>
        <taxon>Gammaproteobacteria</taxon>
        <taxon>Lysobacterales</taxon>
        <taxon>Lysobacteraceae</taxon>
        <taxon>Xylella</taxon>
    </lineage>
</organism>
<proteinExistence type="inferred from homology"/>
<name>Y1553_XYLFT</name>
<sequence>MLLHIPTILSRTHATSMQERLAAANWTDGRETVGPQGAQVKHNLQLPETSPLRQELGQEILDALARSPLYFAATLPLRTLPPRFNRYQENHQYGFHVDGAVMSLPVAPDHTPASLRSDISCTLFLNDPDEYEGGELIIADTYGEHEVKLPAGDLIIYPSTSLHRVAPVTRGMRIASFFWVQSLVRQATHRHQLLELDTAIQSLTASNTDHNTILRLTNVYHNLLREWSET</sequence>
<reference key="1">
    <citation type="journal article" date="2003" name="J. Bacteriol.">
        <title>Comparative analyses of the complete genome sequences of Pierce's disease and citrus variegated chlorosis strains of Xylella fastidiosa.</title>
        <authorList>
            <person name="Van Sluys M.A."/>
            <person name="de Oliveira M.C."/>
            <person name="Monteiro-Vitorello C.B."/>
            <person name="Miyaki C.Y."/>
            <person name="Furlan L.R."/>
            <person name="Camargo L.E.A."/>
            <person name="da Silva A.C.R."/>
            <person name="Moon D.H."/>
            <person name="Takita M.A."/>
            <person name="Lemos E.G.M."/>
            <person name="Machado M.A."/>
            <person name="Ferro M.I.T."/>
            <person name="da Silva F.R."/>
            <person name="Goldman M.H.S."/>
            <person name="Goldman G.H."/>
            <person name="Lemos M.V.F."/>
            <person name="El-Dorry H."/>
            <person name="Tsai S.M."/>
            <person name="Carrer H."/>
            <person name="Carraro D.M."/>
            <person name="de Oliveira R.C."/>
            <person name="Nunes L.R."/>
            <person name="Siqueira W.J."/>
            <person name="Coutinho L.L."/>
            <person name="Kimura E.T."/>
            <person name="Ferro E.S."/>
            <person name="Harakava R."/>
            <person name="Kuramae E.E."/>
            <person name="Marino C.L."/>
            <person name="Giglioti E."/>
            <person name="Abreu I.L."/>
            <person name="Alves L.M.C."/>
            <person name="do Amaral A.M."/>
            <person name="Baia G.S."/>
            <person name="Blanco S.R."/>
            <person name="Brito M.S."/>
            <person name="Cannavan F.S."/>
            <person name="Celestino A.V."/>
            <person name="da Cunha A.F."/>
            <person name="Fenille R.C."/>
            <person name="Ferro J.A."/>
            <person name="Formighieri E.F."/>
            <person name="Kishi L.T."/>
            <person name="Leoni S.G."/>
            <person name="Oliveira A.R."/>
            <person name="Rosa V.E. Jr."/>
            <person name="Sassaki F.T."/>
            <person name="Sena J.A.D."/>
            <person name="de Souza A.A."/>
            <person name="Truffi D."/>
            <person name="Tsukumo F."/>
            <person name="Yanai G.M."/>
            <person name="Zaros L.G."/>
            <person name="Civerolo E.L."/>
            <person name="Simpson A.J.G."/>
            <person name="Almeida N.F. Jr."/>
            <person name="Setubal J.C."/>
            <person name="Kitajima J.P."/>
        </authorList>
    </citation>
    <scope>NUCLEOTIDE SEQUENCE [LARGE SCALE GENOMIC DNA]</scope>
    <source>
        <strain>Temecula1 / ATCC 700964</strain>
    </source>
</reference>
<feature type="chain" id="PRO_0000206688" description="PKHD-type hydroxylase PD_1553">
    <location>
        <begin position="1"/>
        <end position="230"/>
    </location>
</feature>
<feature type="domain" description="Fe2OG dioxygenase" evidence="1">
    <location>
        <begin position="78"/>
        <end position="182"/>
    </location>
</feature>
<feature type="binding site" evidence="1">
    <location>
        <position position="96"/>
    </location>
    <ligand>
        <name>Fe cation</name>
        <dbReference type="ChEBI" id="CHEBI:24875"/>
    </ligand>
</feature>
<feature type="binding site" evidence="1">
    <location>
        <position position="98"/>
    </location>
    <ligand>
        <name>Fe cation</name>
        <dbReference type="ChEBI" id="CHEBI:24875"/>
    </ligand>
</feature>
<feature type="binding site" evidence="1">
    <location>
        <position position="163"/>
    </location>
    <ligand>
        <name>Fe cation</name>
        <dbReference type="ChEBI" id="CHEBI:24875"/>
    </ligand>
</feature>
<feature type="binding site" evidence="1">
    <location>
        <position position="173"/>
    </location>
    <ligand>
        <name>2-oxoglutarate</name>
        <dbReference type="ChEBI" id="CHEBI:16810"/>
    </ligand>
</feature>